<feature type="chain" id="PRO_1000213806" description="Cell division protein ZapB">
    <location>
        <begin position="1"/>
        <end position="69"/>
    </location>
</feature>
<feature type="coiled-coil region" evidence="1">
    <location>
        <begin position="6"/>
        <end position="68"/>
    </location>
</feature>
<name>ZAPB_TOLAT</name>
<dbReference type="EMBL" id="CP001616">
    <property type="protein sequence ID" value="ACQ94352.1"/>
    <property type="molecule type" value="Genomic_DNA"/>
</dbReference>
<dbReference type="RefSeq" id="WP_015879801.1">
    <property type="nucleotide sequence ID" value="NC_012691.1"/>
</dbReference>
<dbReference type="SMR" id="C4LBS8"/>
<dbReference type="STRING" id="595494.Tola_2759"/>
<dbReference type="KEGG" id="tau:Tola_2759"/>
<dbReference type="eggNOG" id="COG3074">
    <property type="taxonomic scope" value="Bacteria"/>
</dbReference>
<dbReference type="HOGENOM" id="CLU_171174_2_0_6"/>
<dbReference type="OrthoDB" id="6554593at2"/>
<dbReference type="Proteomes" id="UP000009073">
    <property type="component" value="Chromosome"/>
</dbReference>
<dbReference type="GO" id="GO:0005737">
    <property type="term" value="C:cytoplasm"/>
    <property type="evidence" value="ECO:0007669"/>
    <property type="project" value="UniProtKB-SubCell"/>
</dbReference>
<dbReference type="GO" id="GO:0000917">
    <property type="term" value="P:division septum assembly"/>
    <property type="evidence" value="ECO:0007669"/>
    <property type="project" value="UniProtKB-KW"/>
</dbReference>
<dbReference type="GO" id="GO:0043093">
    <property type="term" value="P:FtsZ-dependent cytokinesis"/>
    <property type="evidence" value="ECO:0007669"/>
    <property type="project" value="UniProtKB-UniRule"/>
</dbReference>
<dbReference type="Gene3D" id="1.20.5.340">
    <property type="match status" value="1"/>
</dbReference>
<dbReference type="HAMAP" id="MF_01196">
    <property type="entry name" value="ZapB"/>
    <property type="match status" value="1"/>
</dbReference>
<dbReference type="InterPro" id="IPR009252">
    <property type="entry name" value="Cell_div_ZapB"/>
</dbReference>
<dbReference type="Pfam" id="PF06005">
    <property type="entry name" value="ZapB"/>
    <property type="match status" value="1"/>
</dbReference>
<proteinExistence type="inferred from homology"/>
<sequence>MSFEVLEQLEARVQSAVDGITLLKMELDELRAQNQQLKEENQHLRNEHQAWQERLRSLLGKMDQMNSEG</sequence>
<reference key="1">
    <citation type="submission" date="2009-05" db="EMBL/GenBank/DDBJ databases">
        <title>Complete sequence of Tolumonas auensis DSM 9187.</title>
        <authorList>
            <consortium name="US DOE Joint Genome Institute"/>
            <person name="Lucas S."/>
            <person name="Copeland A."/>
            <person name="Lapidus A."/>
            <person name="Glavina del Rio T."/>
            <person name="Tice H."/>
            <person name="Bruce D."/>
            <person name="Goodwin L."/>
            <person name="Pitluck S."/>
            <person name="Chertkov O."/>
            <person name="Brettin T."/>
            <person name="Detter J.C."/>
            <person name="Han C."/>
            <person name="Larimer F."/>
            <person name="Land M."/>
            <person name="Hauser L."/>
            <person name="Kyrpides N."/>
            <person name="Mikhailova N."/>
            <person name="Spring S."/>
            <person name="Beller H."/>
        </authorList>
    </citation>
    <scope>NUCLEOTIDE SEQUENCE [LARGE SCALE GENOMIC DNA]</scope>
    <source>
        <strain>DSM 9187 / NBRC 110442 / TA 4</strain>
    </source>
</reference>
<accession>C4LBS8</accession>
<keyword id="KW-0131">Cell cycle</keyword>
<keyword id="KW-0132">Cell division</keyword>
<keyword id="KW-0175">Coiled coil</keyword>
<keyword id="KW-0963">Cytoplasm</keyword>
<keyword id="KW-1185">Reference proteome</keyword>
<keyword id="KW-0717">Septation</keyword>
<organism>
    <name type="scientific">Tolumonas auensis (strain DSM 9187 / NBRC 110442 / TA 4)</name>
    <dbReference type="NCBI Taxonomy" id="595494"/>
    <lineage>
        <taxon>Bacteria</taxon>
        <taxon>Pseudomonadati</taxon>
        <taxon>Pseudomonadota</taxon>
        <taxon>Gammaproteobacteria</taxon>
        <taxon>Aeromonadales</taxon>
        <taxon>Aeromonadaceae</taxon>
        <taxon>Tolumonas</taxon>
    </lineage>
</organism>
<protein>
    <recommendedName>
        <fullName evidence="1">Cell division protein ZapB</fullName>
    </recommendedName>
</protein>
<comment type="function">
    <text evidence="1">Non-essential, abundant cell division factor that is required for proper Z-ring formation. It is recruited early to the divisome by direct interaction with FtsZ, stimulating Z-ring assembly and thereby promoting cell division earlier in the cell cycle. Its recruitment to the Z-ring requires functional FtsA or ZipA.</text>
</comment>
<comment type="subunit">
    <text evidence="1">Homodimer. The ends of the coiled-coil dimer bind to each other, forming polymers. Interacts with FtsZ.</text>
</comment>
<comment type="subcellular location">
    <subcellularLocation>
        <location evidence="1">Cytoplasm</location>
    </subcellularLocation>
    <text evidence="1">Localizes to the septum at mid-cell, in a FtsZ-like pattern.</text>
</comment>
<comment type="similarity">
    <text evidence="1">Belongs to the ZapB family.</text>
</comment>
<evidence type="ECO:0000255" key="1">
    <source>
        <dbReference type="HAMAP-Rule" id="MF_01196"/>
    </source>
</evidence>
<gene>
    <name evidence="1" type="primary">zapB</name>
    <name type="ordered locus">Tola_2759</name>
</gene>